<name>MTNC_THISH</name>
<feature type="chain" id="PRO_1000187395" description="Enolase-phosphatase E1">
    <location>
        <begin position="1"/>
        <end position="224"/>
    </location>
</feature>
<sequence>MTKIILTDIEGTTSSLSFVKDVLFPYAREHLPEFVRGHRDDTEVKRLLADARAYAGGDLDEEALIERMIGWIDNDQKITPLKALQGLIWEDGYARGDFQGHVYEDAVAHLRQWHQQGLRLAVYSSGSVHAQKLLFGHTAFGDLNPLFEAYFDTRIGGKRDTASYKAIAKELGVEPREVLFLSDLRAELDAAAEAGMKTTALDRAGNGEDFGPHPVARDFAGVGV</sequence>
<reference key="1">
    <citation type="journal article" date="2011" name="Stand. Genomic Sci.">
        <title>Complete genome sequence of 'Thioalkalivibrio sulfidophilus' HL-EbGr7.</title>
        <authorList>
            <person name="Muyzer G."/>
            <person name="Sorokin D.Y."/>
            <person name="Mavromatis K."/>
            <person name="Lapidus A."/>
            <person name="Clum A."/>
            <person name="Ivanova N."/>
            <person name="Pati A."/>
            <person name="d'Haeseleer P."/>
            <person name="Woyke T."/>
            <person name="Kyrpides N.C."/>
        </authorList>
    </citation>
    <scope>NUCLEOTIDE SEQUENCE [LARGE SCALE GENOMIC DNA]</scope>
    <source>
        <strain>HL-EbGR7</strain>
    </source>
</reference>
<protein>
    <recommendedName>
        <fullName evidence="1">Enolase-phosphatase E1</fullName>
        <ecNumber evidence="1">3.1.3.77</ecNumber>
    </recommendedName>
    <alternativeName>
        <fullName evidence="1">2,3-diketo-5-methylthio-1-phosphopentane phosphatase</fullName>
    </alternativeName>
</protein>
<dbReference type="EC" id="3.1.3.77" evidence="1"/>
<dbReference type="EMBL" id="CP001339">
    <property type="protein sequence ID" value="ACL73700.1"/>
    <property type="molecule type" value="Genomic_DNA"/>
</dbReference>
<dbReference type="RefSeq" id="WP_012639175.1">
    <property type="nucleotide sequence ID" value="NC_011901.1"/>
</dbReference>
<dbReference type="SMR" id="B8GMB3"/>
<dbReference type="STRING" id="396588.Tgr7_2625"/>
<dbReference type="KEGG" id="tgr:Tgr7_2625"/>
<dbReference type="eggNOG" id="COG4229">
    <property type="taxonomic scope" value="Bacteria"/>
</dbReference>
<dbReference type="HOGENOM" id="CLU_023273_0_0_6"/>
<dbReference type="OrthoDB" id="9797416at2"/>
<dbReference type="UniPathway" id="UPA00904">
    <property type="reaction ID" value="UER00876"/>
</dbReference>
<dbReference type="UniPathway" id="UPA00904">
    <property type="reaction ID" value="UER00877"/>
</dbReference>
<dbReference type="Proteomes" id="UP000002383">
    <property type="component" value="Chromosome"/>
</dbReference>
<dbReference type="GO" id="GO:0043715">
    <property type="term" value="F:2,3-diketo-5-methylthiopentyl-1-phosphate enolase activity"/>
    <property type="evidence" value="ECO:0007669"/>
    <property type="project" value="UniProtKB-UniRule"/>
</dbReference>
<dbReference type="GO" id="GO:0043716">
    <property type="term" value="F:2-hydroxy-3-keto-5-methylthiopentenyl-1-phosphate phosphatase activity"/>
    <property type="evidence" value="ECO:0007669"/>
    <property type="project" value="UniProtKB-UniRule"/>
</dbReference>
<dbReference type="GO" id="GO:0043874">
    <property type="term" value="F:acireductone synthase activity"/>
    <property type="evidence" value="ECO:0007669"/>
    <property type="project" value="UniProtKB-EC"/>
</dbReference>
<dbReference type="GO" id="GO:0000287">
    <property type="term" value="F:magnesium ion binding"/>
    <property type="evidence" value="ECO:0007669"/>
    <property type="project" value="UniProtKB-UniRule"/>
</dbReference>
<dbReference type="GO" id="GO:0019509">
    <property type="term" value="P:L-methionine salvage from methylthioadenosine"/>
    <property type="evidence" value="ECO:0007669"/>
    <property type="project" value="UniProtKB-UniRule"/>
</dbReference>
<dbReference type="CDD" id="cd01629">
    <property type="entry name" value="HAD_EP"/>
    <property type="match status" value="1"/>
</dbReference>
<dbReference type="FunFam" id="3.40.50.1000:FF:000079">
    <property type="entry name" value="Enolase-phosphatase E1"/>
    <property type="match status" value="1"/>
</dbReference>
<dbReference type="Gene3D" id="1.10.720.60">
    <property type="match status" value="1"/>
</dbReference>
<dbReference type="Gene3D" id="3.40.50.1000">
    <property type="entry name" value="HAD superfamily/HAD-like"/>
    <property type="match status" value="1"/>
</dbReference>
<dbReference type="HAMAP" id="MF_01681">
    <property type="entry name" value="Salvage_MtnC"/>
    <property type="match status" value="1"/>
</dbReference>
<dbReference type="InterPro" id="IPR023943">
    <property type="entry name" value="Enolase-ppase_E1"/>
</dbReference>
<dbReference type="InterPro" id="IPR036412">
    <property type="entry name" value="HAD-like_sf"/>
</dbReference>
<dbReference type="InterPro" id="IPR006439">
    <property type="entry name" value="HAD-SF_hydro_IA"/>
</dbReference>
<dbReference type="InterPro" id="IPR023214">
    <property type="entry name" value="HAD_sf"/>
</dbReference>
<dbReference type="NCBIfam" id="TIGR01691">
    <property type="entry name" value="enolase-ppase"/>
    <property type="match status" value="1"/>
</dbReference>
<dbReference type="NCBIfam" id="TIGR01549">
    <property type="entry name" value="HAD-SF-IA-v1"/>
    <property type="match status" value="1"/>
</dbReference>
<dbReference type="NCBIfam" id="TIGR01509">
    <property type="entry name" value="HAD-SF-IA-v3"/>
    <property type="match status" value="1"/>
</dbReference>
<dbReference type="PANTHER" id="PTHR20371">
    <property type="entry name" value="ENOLASE-PHOSPHATASE E1"/>
    <property type="match status" value="1"/>
</dbReference>
<dbReference type="PANTHER" id="PTHR20371:SF1">
    <property type="entry name" value="ENOLASE-PHOSPHATASE E1"/>
    <property type="match status" value="1"/>
</dbReference>
<dbReference type="Pfam" id="PF00702">
    <property type="entry name" value="Hydrolase"/>
    <property type="match status" value="1"/>
</dbReference>
<dbReference type="PRINTS" id="PR00413">
    <property type="entry name" value="HADHALOGNASE"/>
</dbReference>
<dbReference type="SFLD" id="SFLDF00044">
    <property type="entry name" value="enolase-phosphatase"/>
    <property type="match status" value="1"/>
</dbReference>
<dbReference type="SFLD" id="SFLDS00003">
    <property type="entry name" value="Haloacid_Dehalogenase"/>
    <property type="match status" value="1"/>
</dbReference>
<dbReference type="SUPFAM" id="SSF56784">
    <property type="entry name" value="HAD-like"/>
    <property type="match status" value="1"/>
</dbReference>
<keyword id="KW-0028">Amino-acid biosynthesis</keyword>
<keyword id="KW-0378">Hydrolase</keyword>
<keyword id="KW-0460">Magnesium</keyword>
<keyword id="KW-0479">Metal-binding</keyword>
<keyword id="KW-0486">Methionine biosynthesis</keyword>
<keyword id="KW-1185">Reference proteome</keyword>
<accession>B8GMB3</accession>
<evidence type="ECO:0000255" key="1">
    <source>
        <dbReference type="HAMAP-Rule" id="MF_01681"/>
    </source>
</evidence>
<comment type="function">
    <text evidence="1">Bifunctional enzyme that catalyzes the enolization of 2,3-diketo-5-methylthiopentyl-1-phosphate (DK-MTP-1-P) into the intermediate 2-hydroxy-3-keto-5-methylthiopentenyl-1-phosphate (HK-MTPenyl-1-P), which is then dephosphorylated to form the acireductone 1,2-dihydroxy-3-keto-5-methylthiopentene (DHK-MTPene).</text>
</comment>
<comment type="catalytic activity">
    <reaction evidence="1">
        <text>5-methylsulfanyl-2,3-dioxopentyl phosphate + H2O = 1,2-dihydroxy-5-(methylsulfanyl)pent-1-en-3-one + phosphate</text>
        <dbReference type="Rhea" id="RHEA:21700"/>
        <dbReference type="ChEBI" id="CHEBI:15377"/>
        <dbReference type="ChEBI" id="CHEBI:43474"/>
        <dbReference type="ChEBI" id="CHEBI:49252"/>
        <dbReference type="ChEBI" id="CHEBI:58828"/>
        <dbReference type="EC" id="3.1.3.77"/>
    </reaction>
</comment>
<comment type="cofactor">
    <cofactor evidence="1">
        <name>Mg(2+)</name>
        <dbReference type="ChEBI" id="CHEBI:18420"/>
    </cofactor>
    <text evidence="1">Binds 1 Mg(2+) ion per subunit.</text>
</comment>
<comment type="pathway">
    <text evidence="1">Amino-acid biosynthesis; L-methionine biosynthesis via salvage pathway; L-methionine from S-methyl-5-thio-alpha-D-ribose 1-phosphate: step 3/6.</text>
</comment>
<comment type="pathway">
    <text evidence="1">Amino-acid biosynthesis; L-methionine biosynthesis via salvage pathway; L-methionine from S-methyl-5-thio-alpha-D-ribose 1-phosphate: step 4/6.</text>
</comment>
<comment type="subunit">
    <text evidence="1">Monomer.</text>
</comment>
<comment type="similarity">
    <text evidence="1">Belongs to the HAD-like hydrolase superfamily. MasA/MtnC family.</text>
</comment>
<proteinExistence type="inferred from homology"/>
<gene>
    <name evidence="1" type="primary">mtnC</name>
    <name type="ordered locus">Tgr7_2625</name>
</gene>
<organism>
    <name type="scientific">Thioalkalivibrio sulfidiphilus (strain HL-EbGR7)</name>
    <dbReference type="NCBI Taxonomy" id="396588"/>
    <lineage>
        <taxon>Bacteria</taxon>
        <taxon>Pseudomonadati</taxon>
        <taxon>Pseudomonadota</taxon>
        <taxon>Gammaproteobacteria</taxon>
        <taxon>Chromatiales</taxon>
        <taxon>Ectothiorhodospiraceae</taxon>
        <taxon>Thioalkalivibrio</taxon>
    </lineage>
</organism>